<reference key="1">
    <citation type="submission" date="2005-09" db="EMBL/GenBank/DDBJ databases">
        <title>Complete sequence of chromosome 1 of Rhodobacter sphaeroides 2.4.1.</title>
        <authorList>
            <person name="Copeland A."/>
            <person name="Lucas S."/>
            <person name="Lapidus A."/>
            <person name="Barry K."/>
            <person name="Detter J.C."/>
            <person name="Glavina T."/>
            <person name="Hammon N."/>
            <person name="Israni S."/>
            <person name="Pitluck S."/>
            <person name="Richardson P."/>
            <person name="Mackenzie C."/>
            <person name="Choudhary M."/>
            <person name="Larimer F."/>
            <person name="Hauser L.J."/>
            <person name="Land M."/>
            <person name="Donohue T.J."/>
            <person name="Kaplan S."/>
        </authorList>
    </citation>
    <scope>NUCLEOTIDE SEQUENCE [LARGE SCALE GENOMIC DNA]</scope>
    <source>
        <strain>ATCC 17023 / DSM 158 / JCM 6121 / CCUG 31486 / LMG 2827 / NBRC 12203 / NCIMB 8253 / ATH 2.4.1.</strain>
    </source>
</reference>
<organism>
    <name type="scientific">Cereibacter sphaeroides (strain ATCC 17023 / DSM 158 / JCM 6121 / CCUG 31486 / LMG 2827 / NBRC 12203 / NCIMB 8253 / ATH 2.4.1.)</name>
    <name type="common">Rhodobacter sphaeroides</name>
    <dbReference type="NCBI Taxonomy" id="272943"/>
    <lineage>
        <taxon>Bacteria</taxon>
        <taxon>Pseudomonadati</taxon>
        <taxon>Pseudomonadota</taxon>
        <taxon>Alphaproteobacteria</taxon>
        <taxon>Rhodobacterales</taxon>
        <taxon>Paracoccaceae</taxon>
        <taxon>Cereibacter</taxon>
    </lineage>
</organism>
<dbReference type="EC" id="3.6.5.n1" evidence="1"/>
<dbReference type="EMBL" id="CP000143">
    <property type="protein sequence ID" value="ABA78244.2"/>
    <property type="molecule type" value="Genomic_DNA"/>
</dbReference>
<dbReference type="RefSeq" id="YP_352145.2">
    <property type="nucleotide sequence ID" value="NC_007493.2"/>
</dbReference>
<dbReference type="SMR" id="Q3J4P0"/>
<dbReference type="STRING" id="272943.RSP_2088"/>
<dbReference type="EnsemblBacteria" id="ABA78244">
    <property type="protein sequence ID" value="ABA78244"/>
    <property type="gene ID" value="RSP_2088"/>
</dbReference>
<dbReference type="KEGG" id="rsp:RSP_2088"/>
<dbReference type="PATRIC" id="fig|272943.9.peg.980"/>
<dbReference type="eggNOG" id="COG0481">
    <property type="taxonomic scope" value="Bacteria"/>
</dbReference>
<dbReference type="OrthoDB" id="9802948at2"/>
<dbReference type="Proteomes" id="UP000002703">
    <property type="component" value="Chromosome 1"/>
</dbReference>
<dbReference type="GO" id="GO:0005886">
    <property type="term" value="C:plasma membrane"/>
    <property type="evidence" value="ECO:0007669"/>
    <property type="project" value="UniProtKB-SubCell"/>
</dbReference>
<dbReference type="GO" id="GO:0005525">
    <property type="term" value="F:GTP binding"/>
    <property type="evidence" value="ECO:0007669"/>
    <property type="project" value="UniProtKB-UniRule"/>
</dbReference>
<dbReference type="GO" id="GO:0003924">
    <property type="term" value="F:GTPase activity"/>
    <property type="evidence" value="ECO:0007669"/>
    <property type="project" value="UniProtKB-UniRule"/>
</dbReference>
<dbReference type="GO" id="GO:0097216">
    <property type="term" value="F:guanosine tetraphosphate binding"/>
    <property type="evidence" value="ECO:0007669"/>
    <property type="project" value="UniProtKB-ARBA"/>
</dbReference>
<dbReference type="GO" id="GO:0043022">
    <property type="term" value="F:ribosome binding"/>
    <property type="evidence" value="ECO:0007669"/>
    <property type="project" value="UniProtKB-UniRule"/>
</dbReference>
<dbReference type="GO" id="GO:0003746">
    <property type="term" value="F:translation elongation factor activity"/>
    <property type="evidence" value="ECO:0007669"/>
    <property type="project" value="UniProtKB-UniRule"/>
</dbReference>
<dbReference type="GO" id="GO:0045727">
    <property type="term" value="P:positive regulation of translation"/>
    <property type="evidence" value="ECO:0007669"/>
    <property type="project" value="UniProtKB-UniRule"/>
</dbReference>
<dbReference type="CDD" id="cd03699">
    <property type="entry name" value="EF4_II"/>
    <property type="match status" value="1"/>
</dbReference>
<dbReference type="CDD" id="cd16260">
    <property type="entry name" value="EF4_III"/>
    <property type="match status" value="1"/>
</dbReference>
<dbReference type="CDD" id="cd01890">
    <property type="entry name" value="LepA"/>
    <property type="match status" value="1"/>
</dbReference>
<dbReference type="CDD" id="cd03709">
    <property type="entry name" value="lepA_C"/>
    <property type="match status" value="1"/>
</dbReference>
<dbReference type="FunFam" id="3.40.50.300:FF:000078">
    <property type="entry name" value="Elongation factor 4"/>
    <property type="match status" value="1"/>
</dbReference>
<dbReference type="FunFam" id="2.40.30.10:FF:000015">
    <property type="entry name" value="Translation factor GUF1, mitochondrial"/>
    <property type="match status" value="1"/>
</dbReference>
<dbReference type="FunFam" id="3.30.70.240:FF:000007">
    <property type="entry name" value="Translation factor GUF1, mitochondrial"/>
    <property type="match status" value="1"/>
</dbReference>
<dbReference type="FunFam" id="3.30.70.2570:FF:000001">
    <property type="entry name" value="Translation factor GUF1, mitochondrial"/>
    <property type="match status" value="1"/>
</dbReference>
<dbReference type="FunFam" id="3.30.70.870:FF:000004">
    <property type="entry name" value="Translation factor GUF1, mitochondrial"/>
    <property type="match status" value="1"/>
</dbReference>
<dbReference type="Gene3D" id="3.30.70.240">
    <property type="match status" value="1"/>
</dbReference>
<dbReference type="Gene3D" id="3.30.70.2570">
    <property type="entry name" value="Elongation factor 4, C-terminal domain"/>
    <property type="match status" value="1"/>
</dbReference>
<dbReference type="Gene3D" id="3.30.70.870">
    <property type="entry name" value="Elongation Factor G (Translational Gtpase), domain 3"/>
    <property type="match status" value="1"/>
</dbReference>
<dbReference type="Gene3D" id="3.40.50.300">
    <property type="entry name" value="P-loop containing nucleotide triphosphate hydrolases"/>
    <property type="match status" value="1"/>
</dbReference>
<dbReference type="Gene3D" id="2.40.30.10">
    <property type="entry name" value="Translation factors"/>
    <property type="match status" value="1"/>
</dbReference>
<dbReference type="HAMAP" id="MF_00071">
    <property type="entry name" value="LepA"/>
    <property type="match status" value="1"/>
</dbReference>
<dbReference type="InterPro" id="IPR006297">
    <property type="entry name" value="EF-4"/>
</dbReference>
<dbReference type="InterPro" id="IPR035647">
    <property type="entry name" value="EFG_III/V"/>
</dbReference>
<dbReference type="InterPro" id="IPR000640">
    <property type="entry name" value="EFG_V-like"/>
</dbReference>
<dbReference type="InterPro" id="IPR004161">
    <property type="entry name" value="EFTu-like_2"/>
</dbReference>
<dbReference type="InterPro" id="IPR031157">
    <property type="entry name" value="G_TR_CS"/>
</dbReference>
<dbReference type="InterPro" id="IPR038363">
    <property type="entry name" value="LepA_C_sf"/>
</dbReference>
<dbReference type="InterPro" id="IPR013842">
    <property type="entry name" value="LepA_CTD"/>
</dbReference>
<dbReference type="InterPro" id="IPR035654">
    <property type="entry name" value="LepA_IV"/>
</dbReference>
<dbReference type="InterPro" id="IPR027417">
    <property type="entry name" value="P-loop_NTPase"/>
</dbReference>
<dbReference type="InterPro" id="IPR005225">
    <property type="entry name" value="Small_GTP-bd"/>
</dbReference>
<dbReference type="InterPro" id="IPR000795">
    <property type="entry name" value="T_Tr_GTP-bd_dom"/>
</dbReference>
<dbReference type="NCBIfam" id="TIGR01393">
    <property type="entry name" value="lepA"/>
    <property type="match status" value="1"/>
</dbReference>
<dbReference type="NCBIfam" id="TIGR00231">
    <property type="entry name" value="small_GTP"/>
    <property type="match status" value="1"/>
</dbReference>
<dbReference type="PANTHER" id="PTHR43512:SF4">
    <property type="entry name" value="TRANSLATION FACTOR GUF1 HOMOLOG, CHLOROPLASTIC"/>
    <property type="match status" value="1"/>
</dbReference>
<dbReference type="PANTHER" id="PTHR43512">
    <property type="entry name" value="TRANSLATION FACTOR GUF1-RELATED"/>
    <property type="match status" value="1"/>
</dbReference>
<dbReference type="Pfam" id="PF00679">
    <property type="entry name" value="EFG_C"/>
    <property type="match status" value="1"/>
</dbReference>
<dbReference type="Pfam" id="PF00009">
    <property type="entry name" value="GTP_EFTU"/>
    <property type="match status" value="1"/>
</dbReference>
<dbReference type="Pfam" id="PF03144">
    <property type="entry name" value="GTP_EFTU_D2"/>
    <property type="match status" value="1"/>
</dbReference>
<dbReference type="Pfam" id="PF06421">
    <property type="entry name" value="LepA_C"/>
    <property type="match status" value="1"/>
</dbReference>
<dbReference type="PRINTS" id="PR00315">
    <property type="entry name" value="ELONGATNFCT"/>
</dbReference>
<dbReference type="SMART" id="SM00838">
    <property type="entry name" value="EFG_C"/>
    <property type="match status" value="1"/>
</dbReference>
<dbReference type="SUPFAM" id="SSF54980">
    <property type="entry name" value="EF-G C-terminal domain-like"/>
    <property type="match status" value="2"/>
</dbReference>
<dbReference type="SUPFAM" id="SSF52540">
    <property type="entry name" value="P-loop containing nucleoside triphosphate hydrolases"/>
    <property type="match status" value="1"/>
</dbReference>
<dbReference type="PROSITE" id="PS00301">
    <property type="entry name" value="G_TR_1"/>
    <property type="match status" value="1"/>
</dbReference>
<dbReference type="PROSITE" id="PS51722">
    <property type="entry name" value="G_TR_2"/>
    <property type="match status" value="1"/>
</dbReference>
<feature type="chain" id="PRO_0000224790" description="Elongation factor 4">
    <location>
        <begin position="1"/>
        <end position="602"/>
    </location>
</feature>
<feature type="domain" description="tr-type G">
    <location>
        <begin position="8"/>
        <end position="190"/>
    </location>
</feature>
<feature type="binding site" evidence="1">
    <location>
        <begin position="20"/>
        <end position="25"/>
    </location>
    <ligand>
        <name>GTP</name>
        <dbReference type="ChEBI" id="CHEBI:37565"/>
    </ligand>
</feature>
<feature type="binding site" evidence="1">
    <location>
        <begin position="137"/>
        <end position="140"/>
    </location>
    <ligand>
        <name>GTP</name>
        <dbReference type="ChEBI" id="CHEBI:37565"/>
    </ligand>
</feature>
<evidence type="ECO:0000255" key="1">
    <source>
        <dbReference type="HAMAP-Rule" id="MF_00071"/>
    </source>
</evidence>
<accession>Q3J4P0</accession>
<sequence>MPRMTQLDLIRNFSIVAHIDHGKSTLADRLIQLTGTVAERDMKAQILDSMDIERERGITIKANTVRIDYPAKDGRTYVLNLIDTPGHVDFAYEVSRSMRAVEGSLLVVDASQGVEAQTLANVYQALDAGHEIVPVLNKIDLPAAEPERVKSQIEDVIGLDASDAVLISAKSGLGIPDVLEAIVHRLPPPKGDREAPLKAMLVDSWYDAYLGVVVMIRVMDGVIRKGDRVKMMQTGAVYGIDRLAVLKPQMVDIAELGPGEIGVLTASIKQVRDTRVGDTITHEKKGCAAPLPGFKPAQPVVFCGLFPVDANDFEALREAIEKLALNDASFTYEMETSAALGFGFRCGFLGLLHLEVVRDRLEREYDLDLITTAPSVVYQIYMKDGTLQELHNPTDMPDLTYVDHIEEPRIRATIMVPDEYLGDVLKLCQDRRGIQLDLSYAGARAMVVYDLPLNEVVFDFYDRLKSVTKGYASFDYQITGYREDFLVKMSILVNDEPVDALSMMVHRDRADMRGRAMVEKLKELIPRHMFKIPIQAAIGGRVIARETISAMRKDVTAKCYGGDATRKRKLLDKQKAGKKKMRQFGKVEIPQQAFINALKMDS</sequence>
<proteinExistence type="inferred from homology"/>
<gene>
    <name evidence="1" type="primary">lepA</name>
    <name type="ordered locus">RHOS4_06760</name>
    <name type="ORF">RSP_2088</name>
</gene>
<protein>
    <recommendedName>
        <fullName evidence="1">Elongation factor 4</fullName>
        <shortName evidence="1">EF-4</shortName>
        <ecNumber evidence="1">3.6.5.n1</ecNumber>
    </recommendedName>
    <alternativeName>
        <fullName evidence="1">Ribosomal back-translocase LepA</fullName>
    </alternativeName>
</protein>
<comment type="function">
    <text evidence="1">Required for accurate and efficient protein synthesis under certain stress conditions. May act as a fidelity factor of the translation reaction, by catalyzing a one-codon backward translocation of tRNAs on improperly translocated ribosomes. Back-translocation proceeds from a post-translocation (POST) complex to a pre-translocation (PRE) complex, thus giving elongation factor G a second chance to translocate the tRNAs correctly. Binds to ribosomes in a GTP-dependent manner.</text>
</comment>
<comment type="catalytic activity">
    <reaction evidence="1">
        <text>GTP + H2O = GDP + phosphate + H(+)</text>
        <dbReference type="Rhea" id="RHEA:19669"/>
        <dbReference type="ChEBI" id="CHEBI:15377"/>
        <dbReference type="ChEBI" id="CHEBI:15378"/>
        <dbReference type="ChEBI" id="CHEBI:37565"/>
        <dbReference type="ChEBI" id="CHEBI:43474"/>
        <dbReference type="ChEBI" id="CHEBI:58189"/>
        <dbReference type="EC" id="3.6.5.n1"/>
    </reaction>
</comment>
<comment type="subcellular location">
    <subcellularLocation>
        <location evidence="1">Cell inner membrane</location>
        <topology evidence="1">Peripheral membrane protein</topology>
        <orientation evidence="1">Cytoplasmic side</orientation>
    </subcellularLocation>
</comment>
<comment type="similarity">
    <text evidence="1">Belongs to the TRAFAC class translation factor GTPase superfamily. Classic translation factor GTPase family. LepA subfamily.</text>
</comment>
<keyword id="KW-0997">Cell inner membrane</keyword>
<keyword id="KW-1003">Cell membrane</keyword>
<keyword id="KW-0342">GTP-binding</keyword>
<keyword id="KW-0378">Hydrolase</keyword>
<keyword id="KW-0472">Membrane</keyword>
<keyword id="KW-0547">Nucleotide-binding</keyword>
<keyword id="KW-0648">Protein biosynthesis</keyword>
<keyword id="KW-1185">Reference proteome</keyword>
<name>LEPA_CERS4</name>